<reference key="1">
    <citation type="journal article" date="2006" name="Environ. Microbiol.">
        <title>Whole genome analysis of the marine Bacteroidetes'Gramella forsetii' reveals adaptations to degradation of polymeric organic matter.</title>
        <authorList>
            <person name="Bauer M."/>
            <person name="Kube M."/>
            <person name="Teeling H."/>
            <person name="Richter M."/>
            <person name="Lombardot T."/>
            <person name="Allers E."/>
            <person name="Wuerdemann C.A."/>
            <person name="Quast C."/>
            <person name="Kuhl H."/>
            <person name="Knaust F."/>
            <person name="Woebken D."/>
            <person name="Bischof K."/>
            <person name="Mussmann M."/>
            <person name="Choudhuri J.V."/>
            <person name="Meyer F."/>
            <person name="Reinhardt R."/>
            <person name="Amann R.I."/>
            <person name="Gloeckner F.O."/>
        </authorList>
    </citation>
    <scope>NUCLEOTIDE SEQUENCE [LARGE SCALE GENOMIC DNA]</scope>
    <source>
        <strain>DSM 17595 / CGMCC 1.15422 / KT0803</strain>
    </source>
</reference>
<dbReference type="EC" id="6.3.2.1" evidence="1"/>
<dbReference type="EMBL" id="CU207366">
    <property type="protein sequence ID" value="CAL68482.1"/>
    <property type="molecule type" value="Genomic_DNA"/>
</dbReference>
<dbReference type="RefSeq" id="WP_011711383.1">
    <property type="nucleotide sequence ID" value="NC_008571.1"/>
</dbReference>
<dbReference type="SMR" id="A0M787"/>
<dbReference type="STRING" id="411154.GFO_3544"/>
<dbReference type="KEGG" id="gfo:GFO_3544"/>
<dbReference type="eggNOG" id="COG0414">
    <property type="taxonomic scope" value="Bacteria"/>
</dbReference>
<dbReference type="HOGENOM" id="CLU_047148_0_0_10"/>
<dbReference type="OrthoDB" id="9773087at2"/>
<dbReference type="UniPathway" id="UPA00028">
    <property type="reaction ID" value="UER00005"/>
</dbReference>
<dbReference type="Proteomes" id="UP000000755">
    <property type="component" value="Chromosome"/>
</dbReference>
<dbReference type="GO" id="GO:0005829">
    <property type="term" value="C:cytosol"/>
    <property type="evidence" value="ECO:0007669"/>
    <property type="project" value="TreeGrafter"/>
</dbReference>
<dbReference type="GO" id="GO:0005524">
    <property type="term" value="F:ATP binding"/>
    <property type="evidence" value="ECO:0007669"/>
    <property type="project" value="UniProtKB-KW"/>
</dbReference>
<dbReference type="GO" id="GO:0004592">
    <property type="term" value="F:pantoate-beta-alanine ligase activity"/>
    <property type="evidence" value="ECO:0007669"/>
    <property type="project" value="UniProtKB-UniRule"/>
</dbReference>
<dbReference type="GO" id="GO:0015940">
    <property type="term" value="P:pantothenate biosynthetic process"/>
    <property type="evidence" value="ECO:0007669"/>
    <property type="project" value="UniProtKB-UniRule"/>
</dbReference>
<dbReference type="Gene3D" id="3.40.50.620">
    <property type="entry name" value="HUPs"/>
    <property type="match status" value="1"/>
</dbReference>
<dbReference type="Gene3D" id="3.30.1300.10">
    <property type="entry name" value="Pantoate-beta-alanine ligase, C-terminal domain"/>
    <property type="match status" value="1"/>
</dbReference>
<dbReference type="HAMAP" id="MF_00158">
    <property type="entry name" value="PanC"/>
    <property type="match status" value="1"/>
</dbReference>
<dbReference type="InterPro" id="IPR004821">
    <property type="entry name" value="Cyt_trans-like"/>
</dbReference>
<dbReference type="InterPro" id="IPR003721">
    <property type="entry name" value="Pantoate_ligase"/>
</dbReference>
<dbReference type="InterPro" id="IPR042176">
    <property type="entry name" value="Pantoate_ligase_C"/>
</dbReference>
<dbReference type="InterPro" id="IPR014729">
    <property type="entry name" value="Rossmann-like_a/b/a_fold"/>
</dbReference>
<dbReference type="NCBIfam" id="TIGR00125">
    <property type="entry name" value="cyt_tran_rel"/>
    <property type="match status" value="1"/>
</dbReference>
<dbReference type="NCBIfam" id="TIGR00018">
    <property type="entry name" value="panC"/>
    <property type="match status" value="1"/>
</dbReference>
<dbReference type="PANTHER" id="PTHR21299">
    <property type="entry name" value="CYTIDYLATE KINASE/PANTOATE-BETA-ALANINE LIGASE"/>
    <property type="match status" value="1"/>
</dbReference>
<dbReference type="PANTHER" id="PTHR21299:SF1">
    <property type="entry name" value="PANTOATE--BETA-ALANINE LIGASE"/>
    <property type="match status" value="1"/>
</dbReference>
<dbReference type="Pfam" id="PF02569">
    <property type="entry name" value="Pantoate_ligase"/>
    <property type="match status" value="1"/>
</dbReference>
<dbReference type="SUPFAM" id="SSF52374">
    <property type="entry name" value="Nucleotidylyl transferase"/>
    <property type="match status" value="1"/>
</dbReference>
<accession>A0M787</accession>
<organism>
    <name type="scientific">Christiangramia forsetii (strain DSM 17595 / CGMCC 1.15422 / KT0803)</name>
    <name type="common">Gramella forsetii</name>
    <dbReference type="NCBI Taxonomy" id="411154"/>
    <lineage>
        <taxon>Bacteria</taxon>
        <taxon>Pseudomonadati</taxon>
        <taxon>Bacteroidota</taxon>
        <taxon>Flavobacteriia</taxon>
        <taxon>Flavobacteriales</taxon>
        <taxon>Flavobacteriaceae</taxon>
        <taxon>Christiangramia</taxon>
    </lineage>
</organism>
<keyword id="KW-0067">ATP-binding</keyword>
<keyword id="KW-0963">Cytoplasm</keyword>
<keyword id="KW-0436">Ligase</keyword>
<keyword id="KW-0547">Nucleotide-binding</keyword>
<keyword id="KW-0566">Pantothenate biosynthesis</keyword>
<name>PANC_CHRFK</name>
<evidence type="ECO:0000255" key="1">
    <source>
        <dbReference type="HAMAP-Rule" id="MF_00158"/>
    </source>
</evidence>
<proteinExistence type="inferred from homology"/>
<comment type="function">
    <text evidence="1">Catalyzes the condensation of pantoate with beta-alanine in an ATP-dependent reaction via a pantoyl-adenylate intermediate.</text>
</comment>
<comment type="catalytic activity">
    <reaction evidence="1">
        <text>(R)-pantoate + beta-alanine + ATP = (R)-pantothenate + AMP + diphosphate + H(+)</text>
        <dbReference type="Rhea" id="RHEA:10912"/>
        <dbReference type="ChEBI" id="CHEBI:15378"/>
        <dbReference type="ChEBI" id="CHEBI:15980"/>
        <dbReference type="ChEBI" id="CHEBI:29032"/>
        <dbReference type="ChEBI" id="CHEBI:30616"/>
        <dbReference type="ChEBI" id="CHEBI:33019"/>
        <dbReference type="ChEBI" id="CHEBI:57966"/>
        <dbReference type="ChEBI" id="CHEBI:456215"/>
        <dbReference type="EC" id="6.3.2.1"/>
    </reaction>
</comment>
<comment type="pathway">
    <text evidence="1">Cofactor biosynthesis; (R)-pantothenate biosynthesis; (R)-pantothenate from (R)-pantoate and beta-alanine: step 1/1.</text>
</comment>
<comment type="subunit">
    <text evidence="1">Homodimer.</text>
</comment>
<comment type="subcellular location">
    <subcellularLocation>
        <location evidence="1">Cytoplasm</location>
    </subcellularLocation>
</comment>
<comment type="miscellaneous">
    <text evidence="1">The reaction proceeds by a bi uni uni bi ping pong mechanism.</text>
</comment>
<comment type="similarity">
    <text evidence="1">Belongs to the pantothenate synthetase family.</text>
</comment>
<protein>
    <recommendedName>
        <fullName evidence="1">Pantothenate synthetase</fullName>
        <shortName evidence="1">PS</shortName>
        <ecNumber evidence="1">6.3.2.1</ecNumber>
    </recommendedName>
    <alternativeName>
        <fullName evidence="1">Pantoate--beta-alanine ligase</fullName>
    </alternativeName>
    <alternativeName>
        <fullName evidence="1">Pantoate-activating enzyme</fullName>
    </alternativeName>
</protein>
<feature type="chain" id="PRO_0000305459" description="Pantothenate synthetase">
    <location>
        <begin position="1"/>
        <end position="283"/>
    </location>
</feature>
<feature type="active site" description="Proton donor" evidence="1">
    <location>
        <position position="37"/>
    </location>
</feature>
<feature type="binding site" evidence="1">
    <location>
        <begin position="30"/>
        <end position="37"/>
    </location>
    <ligand>
        <name>ATP</name>
        <dbReference type="ChEBI" id="CHEBI:30616"/>
    </ligand>
</feature>
<feature type="binding site" evidence="1">
    <location>
        <position position="61"/>
    </location>
    <ligand>
        <name>(R)-pantoate</name>
        <dbReference type="ChEBI" id="CHEBI:15980"/>
    </ligand>
</feature>
<feature type="binding site" evidence="1">
    <location>
        <position position="61"/>
    </location>
    <ligand>
        <name>beta-alanine</name>
        <dbReference type="ChEBI" id="CHEBI:57966"/>
    </ligand>
</feature>
<feature type="binding site" evidence="1">
    <location>
        <begin position="149"/>
        <end position="152"/>
    </location>
    <ligand>
        <name>ATP</name>
        <dbReference type="ChEBI" id="CHEBI:30616"/>
    </ligand>
</feature>
<feature type="binding site" evidence="1">
    <location>
        <position position="155"/>
    </location>
    <ligand>
        <name>(R)-pantoate</name>
        <dbReference type="ChEBI" id="CHEBI:15980"/>
    </ligand>
</feature>
<feature type="binding site" evidence="1">
    <location>
        <position position="178"/>
    </location>
    <ligand>
        <name>ATP</name>
        <dbReference type="ChEBI" id="CHEBI:30616"/>
    </ligand>
</feature>
<feature type="binding site" evidence="1">
    <location>
        <begin position="186"/>
        <end position="189"/>
    </location>
    <ligand>
        <name>ATP</name>
        <dbReference type="ChEBI" id="CHEBI:30616"/>
    </ligand>
</feature>
<sequence>MQVFREKQLLIQAIQKVKSDGKSIGLVPTMGALHEGHLSLVTNALKDSDQVIVSIFVNPTQFDNPEDLEKYPRNLNKDIELLEKETSDIWVFSPTANELYGDKILSQNFDFEGLESVMEGEFRAGHFNGVGTVVKHLFEVITPDKAFFGEKDFQQLQIIRKLIEKTGLPVEIVGCPILREDSGLARSSRNERLSFQNRKEAAFIYEVLQNANRLFGTESAEHTTNWVENQFKNNQHLKLEYFEIADSETLKKVNKKEKGKQYRAFIAAYSDGIRLIDNIALNN</sequence>
<gene>
    <name evidence="1" type="primary">panC</name>
    <name type="ordered locus">GFO_3544</name>
</gene>